<feature type="signal peptide" evidence="4">
    <location>
        <begin position="1"/>
        <end position="18"/>
    </location>
</feature>
<feature type="chain" id="PRO_0000392924" description="Protein Wnt-3a">
    <location>
        <begin position="19"/>
        <end position="352"/>
    </location>
</feature>
<feature type="lipid moiety-binding region" description="O-palmitoleoyl serine; by PORCN" evidence="7">
    <location>
        <position position="209"/>
    </location>
</feature>
<feature type="glycosylation site" description="N-linked (GlcNAc...) asparagine" evidence="4">
    <location>
        <position position="87"/>
    </location>
</feature>
<feature type="glycosylation site" description="N-linked (GlcNAc...) asparagine" evidence="4">
    <location>
        <position position="92"/>
    </location>
</feature>
<feature type="glycosylation site" description="N-linked (GlcNAc...) asparagine" evidence="4">
    <location>
        <position position="298"/>
    </location>
</feature>
<feature type="disulfide bond" evidence="2">
    <location>
        <begin position="77"/>
        <end position="88"/>
    </location>
</feature>
<feature type="disulfide bond" evidence="2">
    <location>
        <begin position="128"/>
        <end position="136"/>
    </location>
</feature>
<feature type="disulfide bond" evidence="2">
    <location>
        <begin position="138"/>
        <end position="155"/>
    </location>
</feature>
<feature type="disulfide bond" evidence="2">
    <location>
        <begin position="203"/>
        <end position="217"/>
    </location>
</feature>
<feature type="disulfide bond" evidence="2">
    <location>
        <begin position="205"/>
        <end position="212"/>
    </location>
</feature>
<feature type="disulfide bond" evidence="2">
    <location>
        <begin position="281"/>
        <end position="312"/>
    </location>
</feature>
<feature type="disulfide bond" evidence="2">
    <location>
        <begin position="297"/>
        <end position="307"/>
    </location>
</feature>
<feature type="disulfide bond" evidence="2">
    <location>
        <begin position="311"/>
        <end position="351"/>
    </location>
</feature>
<feature type="disulfide bond" evidence="2">
    <location>
        <begin position="327"/>
        <end position="342"/>
    </location>
</feature>
<feature type="disulfide bond" evidence="2">
    <location>
        <begin position="329"/>
        <end position="339"/>
    </location>
</feature>
<feature type="disulfide bond" evidence="2">
    <location>
        <begin position="334"/>
        <end position="335"/>
    </location>
</feature>
<feature type="splice variant" id="VSP_038851" description="In isoform 2." evidence="8">
    <original>MASFGYFLFLCGLSQALSSYPIWW</original>
    <variation>MKSFCSEVVAKSRLGLKQWGWCGWTPMGSAWKKWISEQRSSLELWDVG</variation>
    <location>
        <begin position="1"/>
        <end position="24"/>
    </location>
</feature>
<protein>
    <recommendedName>
        <fullName>Protein Wnt-3a</fullName>
    </recommendedName>
</protein>
<gene>
    <name type="primary">WNT3A</name>
</gene>
<name>WNT3A_CHICK</name>
<reference key="1">
    <citation type="journal article" date="2000" name="Dev. Growth Differ.">
        <title>Involvement of frizzled-10 in Wnt-7a signaling during chick limb development.</title>
        <authorList>
            <person name="Kawakami Y."/>
            <person name="Wada N."/>
            <person name="Nishimatsu S."/>
            <person name="Nohno T."/>
        </authorList>
    </citation>
    <scope>NUCLEOTIDE SEQUENCE [MRNA] (ISOFORM 2)</scope>
    <source>
        <tissue>Embryo</tissue>
    </source>
</reference>
<reference key="2">
    <citation type="journal article" date="2006" name="Dev. Dyn.">
        <title>Expression patterns of Wnt genes during development of an anterior part of the chicken eye.</title>
        <authorList>
            <person name="Fokina V.M."/>
            <person name="Frolova E.I."/>
        </authorList>
    </citation>
    <scope>NUCLEOTIDE SEQUENCE [MRNA] (ISOFORM 1)</scope>
    <scope>ALTERNATIVE SPLICING</scope>
    <scope>TISSUE SPECIFICITY</scope>
    <scope>DEVELOPMENTAL STAGE</scope>
</reference>
<reference key="3">
    <citation type="journal article" date="2007" name="Dev. Growth Differ.">
        <title>A Wnt3a variant participates in chick apical ectodermal ridge formation: Distinct biological activities of Wnt3a splice variants in chick limb development.</title>
        <authorList>
            <person name="Narita T."/>
            <person name="Nishimatsu S."/>
            <person name="Wada N."/>
            <person name="Nohno T."/>
        </authorList>
    </citation>
    <scope>NUCLEOTIDE SEQUENCE [MRNA] (ISOFORM 1)</scope>
    <scope>ALTERNATIVE SPLICING</scope>
    <scope>TISSUE SPECIFICITY</scope>
    <scope>FUNCTION</scope>
    <scope>SUBCELLULAR LOCATION</scope>
    <source>
        <tissue>Embryo</tissue>
    </source>
</reference>
<reference key="4">
    <citation type="journal article" date="2011" name="PLoS ONE">
        <title>Differential palmit(e)oylation of Wnt1 on C93 and S224 residues has overlapping and distinct consequences.</title>
        <authorList>
            <person name="Galli L.M."/>
            <person name="Burrus L.W."/>
        </authorList>
    </citation>
    <scope>PRELIMINARY CYSTEINE PALMITOYLATION</scope>
    <scope>PALMITOLEOYLATION AT SER-209</scope>
</reference>
<organism>
    <name type="scientific">Gallus gallus</name>
    <name type="common">Chicken</name>
    <dbReference type="NCBI Taxonomy" id="9031"/>
    <lineage>
        <taxon>Eukaryota</taxon>
        <taxon>Metazoa</taxon>
        <taxon>Chordata</taxon>
        <taxon>Craniata</taxon>
        <taxon>Vertebrata</taxon>
        <taxon>Euteleostomi</taxon>
        <taxon>Archelosauria</taxon>
        <taxon>Archosauria</taxon>
        <taxon>Dinosauria</taxon>
        <taxon>Saurischia</taxon>
        <taxon>Theropoda</taxon>
        <taxon>Coelurosauria</taxon>
        <taxon>Aves</taxon>
        <taxon>Neognathae</taxon>
        <taxon>Galloanserae</taxon>
        <taxon>Galliformes</taxon>
        <taxon>Phasianidae</taxon>
        <taxon>Phasianinae</taxon>
        <taxon>Gallus</taxon>
    </lineage>
</organism>
<proteinExistence type="evidence at protein level"/>
<evidence type="ECO:0000250" key="1">
    <source>
        <dbReference type="UniProtKB" id="P27467"/>
    </source>
</evidence>
<evidence type="ECO:0000250" key="2">
    <source>
        <dbReference type="UniProtKB" id="P28026"/>
    </source>
</evidence>
<evidence type="ECO:0000250" key="3">
    <source>
        <dbReference type="UniProtKB" id="P56704"/>
    </source>
</evidence>
<evidence type="ECO:0000255" key="4"/>
<evidence type="ECO:0000269" key="5">
    <source>
    </source>
</evidence>
<evidence type="ECO:0000269" key="6">
    <source>
    </source>
</evidence>
<evidence type="ECO:0000269" key="7">
    <source>
    </source>
</evidence>
<evidence type="ECO:0000303" key="8">
    <source>
    </source>
</evidence>
<evidence type="ECO:0000305" key="9"/>
<comment type="function">
    <molecule>Isoform 1</molecule>
    <text evidence="1 3 6 9">Ligand for members of the frizzled family of seven transmembrane receptors (Probable). Functions in the canonical Wnt signaling pathway that results in activation of transcription factors of the TCF/LEF family (PubMed:17488271). Regulates chick apical ectodermal ridge formation (PubMed:17488271). Required for normal embryonic mesoderm development and formation of caudal somites. Required for normal morphogenesis of the developing neural tube (By similarity).</text>
</comment>
<comment type="subcellular location">
    <molecule>Isoform 1</molecule>
    <subcellularLocation>
        <location evidence="9">Secreted</location>
        <location evidence="9">Extracellular space</location>
        <location evidence="9">Extracellular matrix</location>
    </subcellularLocation>
    <subcellularLocation>
        <location evidence="6">Secreted</location>
    </subcellularLocation>
</comment>
<comment type="subcellular location">
    <molecule>Isoform 2</molecule>
    <subcellularLocation>
        <location evidence="6">Cytoplasm</location>
    </subcellularLocation>
</comment>
<comment type="alternative products">
    <event type="alternative splicing"/>
    <isoform>
        <id>Q2LMP1-1</id>
        <name>1</name>
        <sequence type="displayed"/>
    </isoform>
    <isoform>
        <id>Q2LMP1-2</id>
        <name>2</name>
        <sequence type="described" ref="VSP_038851"/>
    </isoform>
</comment>
<comment type="tissue specificity">
    <text evidence="5 6">Expressed in cornea. Isoform 1 is expressed in the primitive streak, dorsal neural tube, proximal otic vesicle, the apical ectodermal ridge and the epithelium of feather buds.</text>
</comment>
<comment type="developmental stage">
    <text evidence="5">In the eye, the expression was observed at stage 23 in the ocular surface epithelium ventral to the corneal epithelium. Strongly expressed in the entire ocular surface at stage 26 including the corneal epithelium. Remained strongly expressed at stage 30.</text>
</comment>
<comment type="PTM">
    <text evidence="1 3 7">Palmitoleoylation is required for efficient binding to frizzled receptors (PubMed:22046319). Depalmitoleoylation leads to inhibit the Wnt signaling pathway (By similarity).</text>
</comment>
<comment type="PTM">
    <text evidence="3">Disulfide bonds have critical and distinct roles in secretion and activity. Loss of each conserved cysteine in WNT3A results in high molecular weight oxidized Wnt oligomers, which are formed through inter-Wnt disulfide bonding (By similarity).</text>
</comment>
<comment type="miscellaneous">
    <molecule>Isoform 2</molecule>
    <text evidence="6">Not secreted.</text>
</comment>
<comment type="similarity">
    <text evidence="9">Belongs to the Wnt family.</text>
</comment>
<comment type="caution">
    <text evidence="7">A palmitoylation site was proposed at Cys-77, but it was later shown that this cysteine is engaged in a disulfide bond.</text>
</comment>
<sequence>MASFGYFLFLCGLSQALSSYPIWWSLAIGHQYSSLGTQPILCGSIPGLVPKQLRFCRNYVEIMPSVAEGVKIGIQECQHQFRGRRWNCTTVNDSLAIFGPVLDKATRESAFVHAIASAGVAFAVTRSCAEGSATICGCDTRHKGSPGEGWKWGGCSEDVEFGSMVSREFADARENRPDARSAMNRHNNEAGRTSIIELMHLKCKCHGLSGSCEVKTCWWSQPDFRVIGDYLKDKYDSASEMVVEKHRESRGWVETLRPKYNFFKAPTEKDLVYYENSPNFCEPNPETGSFGTRDRICNVTSHGIDGCDLLCCGRGHNTRTEKRKEKCHCIFHWCCYVRCQECIRVYDVHTCK</sequence>
<keyword id="KW-0025">Alternative splicing</keyword>
<keyword id="KW-0963">Cytoplasm</keyword>
<keyword id="KW-0217">Developmental protein</keyword>
<keyword id="KW-1015">Disulfide bond</keyword>
<keyword id="KW-0272">Extracellular matrix</keyword>
<keyword id="KW-0325">Glycoprotein</keyword>
<keyword id="KW-0449">Lipoprotein</keyword>
<keyword id="KW-1185">Reference proteome</keyword>
<keyword id="KW-0964">Secreted</keyword>
<keyword id="KW-0732">Signal</keyword>
<keyword id="KW-0879">Wnt signaling pathway</keyword>
<accession>Q2LMP1</accession>
<accession>Q9PWH1</accession>
<dbReference type="EMBL" id="AB024080">
    <property type="protein sequence ID" value="BAA83743.1"/>
    <property type="molecule type" value="mRNA"/>
</dbReference>
<dbReference type="EMBL" id="DQ022307">
    <property type="protein sequence ID" value="AAY87456.1"/>
    <property type="molecule type" value="mRNA"/>
</dbReference>
<dbReference type="EMBL" id="EF068232">
    <property type="protein sequence ID" value="ABK90821.1"/>
    <property type="molecule type" value="mRNA"/>
</dbReference>
<dbReference type="RefSeq" id="NP_001165072.1">
    <molecule id="Q2LMP1-1"/>
    <property type="nucleotide sequence ID" value="NM_001171601.3"/>
</dbReference>
<dbReference type="RefSeq" id="NP_990006.2">
    <property type="nucleotide sequence ID" value="NM_204675.2"/>
</dbReference>
<dbReference type="SMR" id="Q2LMP1"/>
<dbReference type="FunCoup" id="Q2LMP1">
    <property type="interactions" value="89"/>
</dbReference>
<dbReference type="IntAct" id="Q2LMP1">
    <property type="interactions" value="1"/>
</dbReference>
<dbReference type="STRING" id="9031.ENSGALP00000057582"/>
<dbReference type="GlyCosmos" id="Q2LMP1">
    <property type="glycosylation" value="3 sites, No reported glycans"/>
</dbReference>
<dbReference type="GlyGen" id="Q2LMP1">
    <property type="glycosylation" value="3 sites"/>
</dbReference>
<dbReference type="PaxDb" id="9031-ENSGALP00000030668"/>
<dbReference type="Ensembl" id="ENSGALT00010063681.1">
    <molecule id="Q2LMP1-1"/>
    <property type="protein sequence ID" value="ENSGALP00010039302.1"/>
    <property type="gene ID" value="ENSGALG00010026141.1"/>
</dbReference>
<dbReference type="GeneID" id="395396"/>
<dbReference type="KEGG" id="gga:395396"/>
<dbReference type="CTD" id="89780"/>
<dbReference type="VEuPathDB" id="HostDB:geneid_395396"/>
<dbReference type="eggNOG" id="KOG3913">
    <property type="taxonomic scope" value="Eukaryota"/>
</dbReference>
<dbReference type="GeneTree" id="ENSGT00940000160510"/>
<dbReference type="HOGENOM" id="CLU_033039_1_0_1"/>
<dbReference type="InParanoid" id="Q2LMP1"/>
<dbReference type="OrthoDB" id="5945655at2759"/>
<dbReference type="PhylomeDB" id="Q2LMP1"/>
<dbReference type="Reactome" id="R-GGA-201681">
    <property type="pathway name" value="TCF dependent signaling in response to WNT"/>
</dbReference>
<dbReference type="Reactome" id="R-GGA-3238698">
    <property type="pathway name" value="WNT ligand biogenesis and trafficking"/>
</dbReference>
<dbReference type="Reactome" id="R-GGA-4641262">
    <property type="pathway name" value="Disassembly of the destruction complex and recruitment of AXIN to the membrane"/>
</dbReference>
<dbReference type="Reactome" id="R-GGA-4641263">
    <property type="pathway name" value="Regulation of FZD by ubiquitination"/>
</dbReference>
<dbReference type="Reactome" id="R-GGA-9856649">
    <property type="pathway name" value="Transcriptional and post-translational regulation of MITF-M expression and activity"/>
</dbReference>
<dbReference type="PRO" id="PR:Q2LMP1"/>
<dbReference type="Proteomes" id="UP000000539">
    <property type="component" value="Chromosome 2"/>
</dbReference>
<dbReference type="Bgee" id="ENSGALG00000042657">
    <property type="expression patterns" value="Expressed in lung"/>
</dbReference>
<dbReference type="GO" id="GO:0005829">
    <property type="term" value="C:cytosol"/>
    <property type="evidence" value="ECO:0000314"/>
    <property type="project" value="AgBase"/>
</dbReference>
<dbReference type="GO" id="GO:0005783">
    <property type="term" value="C:endoplasmic reticulum"/>
    <property type="evidence" value="ECO:0000314"/>
    <property type="project" value="AgBase"/>
</dbReference>
<dbReference type="GO" id="GO:0005615">
    <property type="term" value="C:extracellular space"/>
    <property type="evidence" value="ECO:0000314"/>
    <property type="project" value="AgBase"/>
</dbReference>
<dbReference type="GO" id="GO:0005640">
    <property type="term" value="C:nuclear outer membrane"/>
    <property type="evidence" value="ECO:0000314"/>
    <property type="project" value="AgBase"/>
</dbReference>
<dbReference type="GO" id="GO:0005886">
    <property type="term" value="C:plasma membrane"/>
    <property type="evidence" value="ECO:0000303"/>
    <property type="project" value="AgBase"/>
</dbReference>
<dbReference type="GO" id="GO:0005125">
    <property type="term" value="F:cytokine activity"/>
    <property type="evidence" value="ECO:0000318"/>
    <property type="project" value="GO_Central"/>
</dbReference>
<dbReference type="GO" id="GO:0005109">
    <property type="term" value="F:frizzled binding"/>
    <property type="evidence" value="ECO:0000318"/>
    <property type="project" value="GO_Central"/>
</dbReference>
<dbReference type="GO" id="GO:0030509">
    <property type="term" value="P:BMP signaling pathway"/>
    <property type="evidence" value="ECO:0000314"/>
    <property type="project" value="MGI"/>
</dbReference>
<dbReference type="GO" id="GO:0060070">
    <property type="term" value="P:canonical Wnt signaling pathway"/>
    <property type="evidence" value="ECO:0000314"/>
    <property type="project" value="AgBase"/>
</dbReference>
<dbReference type="GO" id="GO:0045165">
    <property type="term" value="P:cell fate commitment"/>
    <property type="evidence" value="ECO:0000318"/>
    <property type="project" value="GO_Central"/>
</dbReference>
<dbReference type="GO" id="GO:0061303">
    <property type="term" value="P:cornea development in camera-type eye"/>
    <property type="evidence" value="ECO:0000270"/>
    <property type="project" value="BHF-UCL"/>
</dbReference>
<dbReference type="GO" id="GO:0048263">
    <property type="term" value="P:determination of dorsal identity"/>
    <property type="evidence" value="ECO:0000304"/>
    <property type="project" value="AgBase"/>
</dbReference>
<dbReference type="GO" id="GO:0009953">
    <property type="term" value="P:dorsal/ventral pattern formation"/>
    <property type="evidence" value="ECO:0000304"/>
    <property type="project" value="AgBase"/>
</dbReference>
<dbReference type="GO" id="GO:0042472">
    <property type="term" value="P:inner ear morphogenesis"/>
    <property type="evidence" value="ECO:0000315"/>
    <property type="project" value="AgBase"/>
</dbReference>
<dbReference type="GO" id="GO:0060173">
    <property type="term" value="P:limb development"/>
    <property type="evidence" value="ECO:0000304"/>
    <property type="project" value="AgBase"/>
</dbReference>
<dbReference type="GO" id="GO:0035108">
    <property type="term" value="P:limb morphogenesis"/>
    <property type="evidence" value="ECO:0000303"/>
    <property type="project" value="AgBase"/>
</dbReference>
<dbReference type="GO" id="GO:0030182">
    <property type="term" value="P:neuron differentiation"/>
    <property type="evidence" value="ECO:0000318"/>
    <property type="project" value="GO_Central"/>
</dbReference>
<dbReference type="GO" id="GO:0090263">
    <property type="term" value="P:positive regulation of canonical Wnt signaling pathway"/>
    <property type="evidence" value="ECO:0000314"/>
    <property type="project" value="AgBase"/>
</dbReference>
<dbReference type="GO" id="GO:0050679">
    <property type="term" value="P:positive regulation of epithelial cell proliferation"/>
    <property type="evidence" value="ECO:0000314"/>
    <property type="project" value="AgBase"/>
</dbReference>
<dbReference type="GO" id="GO:0045743">
    <property type="term" value="P:positive regulation of fibroblast growth factor receptor signaling pathway"/>
    <property type="evidence" value="ECO:0000304"/>
    <property type="project" value="AgBase"/>
</dbReference>
<dbReference type="GO" id="GO:0010628">
    <property type="term" value="P:positive regulation of gene expression"/>
    <property type="evidence" value="ECO:0000314"/>
    <property type="project" value="AgBase"/>
</dbReference>
<dbReference type="GO" id="GO:0045663">
    <property type="term" value="P:positive regulation of myoblast differentiation"/>
    <property type="evidence" value="ECO:0000314"/>
    <property type="project" value="AgBase"/>
</dbReference>
<dbReference type="GO" id="GO:0010831">
    <property type="term" value="P:positive regulation of myotube differentiation"/>
    <property type="evidence" value="ECO:0000314"/>
    <property type="project" value="AgBase"/>
</dbReference>
<dbReference type="GO" id="GO:0045944">
    <property type="term" value="P:positive regulation of transcription by RNA polymerase II"/>
    <property type="evidence" value="ECO:0000316"/>
    <property type="project" value="CACAO"/>
</dbReference>
<dbReference type="GO" id="GO:0060828">
    <property type="term" value="P:regulation of canonical Wnt signaling pathway"/>
    <property type="evidence" value="ECO:0000314"/>
    <property type="project" value="AgBase"/>
</dbReference>
<dbReference type="GO" id="GO:0040036">
    <property type="term" value="P:regulation of fibroblast growth factor receptor signaling pathway"/>
    <property type="evidence" value="ECO:0000304"/>
    <property type="project" value="AgBase"/>
</dbReference>
<dbReference type="CDD" id="cd19335">
    <property type="entry name" value="Wnt_Wnt3_Wnt3a"/>
    <property type="match status" value="1"/>
</dbReference>
<dbReference type="FunFam" id="3.30.2460.20:FF:000009">
    <property type="entry name" value="Protein Wnt-3a"/>
    <property type="match status" value="1"/>
</dbReference>
<dbReference type="Gene3D" id="3.30.2460.20">
    <property type="match status" value="1"/>
</dbReference>
<dbReference type="InterPro" id="IPR005817">
    <property type="entry name" value="Wnt"/>
</dbReference>
<dbReference type="InterPro" id="IPR009141">
    <property type="entry name" value="Wnt3"/>
</dbReference>
<dbReference type="InterPro" id="IPR043158">
    <property type="entry name" value="Wnt_C"/>
</dbReference>
<dbReference type="InterPro" id="IPR018161">
    <property type="entry name" value="Wnt_CS"/>
</dbReference>
<dbReference type="PANTHER" id="PTHR12027:SF88">
    <property type="entry name" value="PROTEIN WNT-3A"/>
    <property type="match status" value="1"/>
</dbReference>
<dbReference type="PANTHER" id="PTHR12027">
    <property type="entry name" value="WNT RELATED"/>
    <property type="match status" value="1"/>
</dbReference>
<dbReference type="Pfam" id="PF00110">
    <property type="entry name" value="wnt"/>
    <property type="match status" value="1"/>
</dbReference>
<dbReference type="PRINTS" id="PR01843">
    <property type="entry name" value="WNT3PROTEIN"/>
</dbReference>
<dbReference type="PRINTS" id="PR01349">
    <property type="entry name" value="WNTPROTEIN"/>
</dbReference>
<dbReference type="SMART" id="SM00097">
    <property type="entry name" value="WNT1"/>
    <property type="match status" value="1"/>
</dbReference>
<dbReference type="PROSITE" id="PS00246">
    <property type="entry name" value="WNT1"/>
    <property type="match status" value="1"/>
</dbReference>